<reference key="1">
    <citation type="journal article" date="2008" name="J. Bacteriol.">
        <title>Genome sequence of a nephritogenic and highly transformable M49 strain of Streptococcus pyogenes.</title>
        <authorList>
            <person name="McShan W.M."/>
            <person name="Ferretti J.J."/>
            <person name="Karasawa T."/>
            <person name="Suvorov A.N."/>
            <person name="Lin S."/>
            <person name="Qin B."/>
            <person name="Jia H."/>
            <person name="Kenton S."/>
            <person name="Najar F."/>
            <person name="Wu H."/>
            <person name="Scott J."/>
            <person name="Roe B.A."/>
            <person name="Savic D.J."/>
        </authorList>
    </citation>
    <scope>NUCLEOTIDE SEQUENCE [LARGE SCALE GENOMIC DNA]</scope>
    <source>
        <strain>NZ131</strain>
    </source>
</reference>
<evidence type="ECO:0000255" key="1">
    <source>
        <dbReference type="HAMAP-Rule" id="MF_00382"/>
    </source>
</evidence>
<evidence type="ECO:0000305" key="2"/>
<feature type="chain" id="PRO_1000122381" description="Large ribosomal subunit protein bL20">
    <location>
        <begin position="1"/>
        <end position="119"/>
    </location>
</feature>
<dbReference type="EMBL" id="CP000829">
    <property type="protein sequence ID" value="ACI60952.1"/>
    <property type="molecule type" value="Genomic_DNA"/>
</dbReference>
<dbReference type="SMR" id="B5XKU0"/>
<dbReference type="KEGG" id="soz:Spy49_0631"/>
<dbReference type="HOGENOM" id="CLU_123265_0_1_9"/>
<dbReference type="Proteomes" id="UP000001039">
    <property type="component" value="Chromosome"/>
</dbReference>
<dbReference type="GO" id="GO:1990904">
    <property type="term" value="C:ribonucleoprotein complex"/>
    <property type="evidence" value="ECO:0007669"/>
    <property type="project" value="UniProtKB-KW"/>
</dbReference>
<dbReference type="GO" id="GO:0005840">
    <property type="term" value="C:ribosome"/>
    <property type="evidence" value="ECO:0007669"/>
    <property type="project" value="UniProtKB-KW"/>
</dbReference>
<dbReference type="GO" id="GO:0019843">
    <property type="term" value="F:rRNA binding"/>
    <property type="evidence" value="ECO:0007669"/>
    <property type="project" value="UniProtKB-UniRule"/>
</dbReference>
<dbReference type="GO" id="GO:0003735">
    <property type="term" value="F:structural constituent of ribosome"/>
    <property type="evidence" value="ECO:0007669"/>
    <property type="project" value="InterPro"/>
</dbReference>
<dbReference type="GO" id="GO:0000027">
    <property type="term" value="P:ribosomal large subunit assembly"/>
    <property type="evidence" value="ECO:0007669"/>
    <property type="project" value="UniProtKB-UniRule"/>
</dbReference>
<dbReference type="GO" id="GO:0006412">
    <property type="term" value="P:translation"/>
    <property type="evidence" value="ECO:0007669"/>
    <property type="project" value="InterPro"/>
</dbReference>
<dbReference type="CDD" id="cd07026">
    <property type="entry name" value="Ribosomal_L20"/>
    <property type="match status" value="1"/>
</dbReference>
<dbReference type="FunFam" id="1.10.1900.20:FF:000001">
    <property type="entry name" value="50S ribosomal protein L20"/>
    <property type="match status" value="1"/>
</dbReference>
<dbReference type="Gene3D" id="6.10.160.10">
    <property type="match status" value="1"/>
</dbReference>
<dbReference type="Gene3D" id="1.10.1900.20">
    <property type="entry name" value="Ribosomal protein L20"/>
    <property type="match status" value="1"/>
</dbReference>
<dbReference type="HAMAP" id="MF_00382">
    <property type="entry name" value="Ribosomal_bL20"/>
    <property type="match status" value="1"/>
</dbReference>
<dbReference type="InterPro" id="IPR005813">
    <property type="entry name" value="Ribosomal_bL20"/>
</dbReference>
<dbReference type="InterPro" id="IPR049946">
    <property type="entry name" value="RIBOSOMAL_L20_CS"/>
</dbReference>
<dbReference type="InterPro" id="IPR035566">
    <property type="entry name" value="Ribosomal_protein_bL20_C"/>
</dbReference>
<dbReference type="NCBIfam" id="TIGR01032">
    <property type="entry name" value="rplT_bact"/>
    <property type="match status" value="1"/>
</dbReference>
<dbReference type="PANTHER" id="PTHR10986">
    <property type="entry name" value="39S RIBOSOMAL PROTEIN L20"/>
    <property type="match status" value="1"/>
</dbReference>
<dbReference type="Pfam" id="PF00453">
    <property type="entry name" value="Ribosomal_L20"/>
    <property type="match status" value="1"/>
</dbReference>
<dbReference type="PRINTS" id="PR00062">
    <property type="entry name" value="RIBOSOMALL20"/>
</dbReference>
<dbReference type="SUPFAM" id="SSF74731">
    <property type="entry name" value="Ribosomal protein L20"/>
    <property type="match status" value="1"/>
</dbReference>
<dbReference type="PROSITE" id="PS00937">
    <property type="entry name" value="RIBOSOMAL_L20"/>
    <property type="match status" value="1"/>
</dbReference>
<keyword id="KW-0687">Ribonucleoprotein</keyword>
<keyword id="KW-0689">Ribosomal protein</keyword>
<keyword id="KW-0694">RNA-binding</keyword>
<keyword id="KW-0699">rRNA-binding</keyword>
<proteinExistence type="inferred from homology"/>
<sequence>MARVKGGVVSRKRRKRILKLAKGYYGAKHILFRTAKEQVMNSYYYAYRDRRQKKRDFRKLWITRINAAARMNGLSYSQLMHGLKLAEIEVNRKMLADLAVADAAAFTALADAAKAKLGK</sequence>
<comment type="function">
    <text evidence="1">Binds directly to 23S ribosomal RNA and is necessary for the in vitro assembly process of the 50S ribosomal subunit. It is not involved in the protein synthesizing functions of that subunit.</text>
</comment>
<comment type="similarity">
    <text evidence="1">Belongs to the bacterial ribosomal protein bL20 family.</text>
</comment>
<organism>
    <name type="scientific">Streptococcus pyogenes serotype M49 (strain NZ131)</name>
    <dbReference type="NCBI Taxonomy" id="471876"/>
    <lineage>
        <taxon>Bacteria</taxon>
        <taxon>Bacillati</taxon>
        <taxon>Bacillota</taxon>
        <taxon>Bacilli</taxon>
        <taxon>Lactobacillales</taxon>
        <taxon>Streptococcaceae</taxon>
        <taxon>Streptococcus</taxon>
    </lineage>
</organism>
<accession>B5XKU0</accession>
<protein>
    <recommendedName>
        <fullName evidence="1">Large ribosomal subunit protein bL20</fullName>
    </recommendedName>
    <alternativeName>
        <fullName evidence="2">50S ribosomal protein L20</fullName>
    </alternativeName>
</protein>
<gene>
    <name evidence="1" type="primary">rplT</name>
    <name type="ordered locus">Spy49_0631</name>
</gene>
<name>RL20_STRPZ</name>